<reference key="1">
    <citation type="journal article" date="2008" name="J. Biotechnol.">
        <title>The lifestyle of Corynebacterium urealyticum derived from its complete genome sequence established by pyrosequencing.</title>
        <authorList>
            <person name="Tauch A."/>
            <person name="Trost E."/>
            <person name="Tilker A."/>
            <person name="Ludewig U."/>
            <person name="Schneiker S."/>
            <person name="Goesmann A."/>
            <person name="Arnold W."/>
            <person name="Bekel T."/>
            <person name="Brinkrolf K."/>
            <person name="Brune I."/>
            <person name="Goetker S."/>
            <person name="Kalinowski J."/>
            <person name="Kamp P.-B."/>
            <person name="Lobo F.P."/>
            <person name="Viehoever P."/>
            <person name="Weisshaar B."/>
            <person name="Soriano F."/>
            <person name="Droege M."/>
            <person name="Puehler A."/>
        </authorList>
    </citation>
    <scope>NUCLEOTIDE SEQUENCE [LARGE SCALE GENOMIC DNA]</scope>
    <source>
        <strain>ATCC 43042 / DSM 7109</strain>
    </source>
</reference>
<gene>
    <name evidence="1" type="primary">purA</name>
    <name type="ordered locus">cu1780</name>
</gene>
<organism>
    <name type="scientific">Corynebacterium urealyticum (strain ATCC 43042 / DSM 7109)</name>
    <dbReference type="NCBI Taxonomy" id="504474"/>
    <lineage>
        <taxon>Bacteria</taxon>
        <taxon>Bacillati</taxon>
        <taxon>Actinomycetota</taxon>
        <taxon>Actinomycetes</taxon>
        <taxon>Mycobacteriales</taxon>
        <taxon>Corynebacteriaceae</taxon>
        <taxon>Corynebacterium</taxon>
    </lineage>
</organism>
<comment type="function">
    <text evidence="1">Plays an important role in the de novo pathway of purine nucleotide biosynthesis. Catalyzes the first committed step in the biosynthesis of AMP from IMP.</text>
</comment>
<comment type="catalytic activity">
    <reaction evidence="1">
        <text>IMP + L-aspartate + GTP = N(6)-(1,2-dicarboxyethyl)-AMP + GDP + phosphate + 2 H(+)</text>
        <dbReference type="Rhea" id="RHEA:15753"/>
        <dbReference type="ChEBI" id="CHEBI:15378"/>
        <dbReference type="ChEBI" id="CHEBI:29991"/>
        <dbReference type="ChEBI" id="CHEBI:37565"/>
        <dbReference type="ChEBI" id="CHEBI:43474"/>
        <dbReference type="ChEBI" id="CHEBI:57567"/>
        <dbReference type="ChEBI" id="CHEBI:58053"/>
        <dbReference type="ChEBI" id="CHEBI:58189"/>
        <dbReference type="EC" id="6.3.4.4"/>
    </reaction>
</comment>
<comment type="cofactor">
    <cofactor evidence="1">
        <name>Mg(2+)</name>
        <dbReference type="ChEBI" id="CHEBI:18420"/>
    </cofactor>
    <text evidence="1">Binds 1 Mg(2+) ion per subunit.</text>
</comment>
<comment type="pathway">
    <text evidence="1">Purine metabolism; AMP biosynthesis via de novo pathway; AMP from IMP: step 1/2.</text>
</comment>
<comment type="subunit">
    <text evidence="1">Homodimer.</text>
</comment>
<comment type="subcellular location">
    <subcellularLocation>
        <location evidence="1">Cytoplasm</location>
    </subcellularLocation>
</comment>
<comment type="similarity">
    <text evidence="1">Belongs to the adenylosuccinate synthetase family.</text>
</comment>
<protein>
    <recommendedName>
        <fullName evidence="1">Adenylosuccinate synthetase</fullName>
        <shortName evidence="1">AMPSase</shortName>
        <shortName evidence="1">AdSS</shortName>
        <ecNumber evidence="1">6.3.4.4</ecNumber>
    </recommendedName>
    <alternativeName>
        <fullName evidence="1">IMP--aspartate ligase</fullName>
    </alternativeName>
</protein>
<dbReference type="EC" id="6.3.4.4" evidence="1"/>
<dbReference type="EMBL" id="AM942444">
    <property type="protein sequence ID" value="CAQ05739.1"/>
    <property type="molecule type" value="Genomic_DNA"/>
</dbReference>
<dbReference type="RefSeq" id="WP_012361015.1">
    <property type="nucleotide sequence ID" value="NC_010545.1"/>
</dbReference>
<dbReference type="SMR" id="B1VHT9"/>
<dbReference type="STRING" id="504474.cu1780"/>
<dbReference type="KEGG" id="cur:cu1780"/>
<dbReference type="eggNOG" id="COG0104">
    <property type="taxonomic scope" value="Bacteria"/>
</dbReference>
<dbReference type="HOGENOM" id="CLU_029848_0_0_11"/>
<dbReference type="UniPathway" id="UPA00075">
    <property type="reaction ID" value="UER00335"/>
</dbReference>
<dbReference type="Proteomes" id="UP000001727">
    <property type="component" value="Chromosome"/>
</dbReference>
<dbReference type="GO" id="GO:0005737">
    <property type="term" value="C:cytoplasm"/>
    <property type="evidence" value="ECO:0007669"/>
    <property type="project" value="UniProtKB-SubCell"/>
</dbReference>
<dbReference type="GO" id="GO:0004019">
    <property type="term" value="F:adenylosuccinate synthase activity"/>
    <property type="evidence" value="ECO:0007669"/>
    <property type="project" value="UniProtKB-UniRule"/>
</dbReference>
<dbReference type="GO" id="GO:0005525">
    <property type="term" value="F:GTP binding"/>
    <property type="evidence" value="ECO:0007669"/>
    <property type="project" value="UniProtKB-UniRule"/>
</dbReference>
<dbReference type="GO" id="GO:0000287">
    <property type="term" value="F:magnesium ion binding"/>
    <property type="evidence" value="ECO:0007669"/>
    <property type="project" value="UniProtKB-UniRule"/>
</dbReference>
<dbReference type="GO" id="GO:0044208">
    <property type="term" value="P:'de novo' AMP biosynthetic process"/>
    <property type="evidence" value="ECO:0007669"/>
    <property type="project" value="UniProtKB-UniRule"/>
</dbReference>
<dbReference type="GO" id="GO:0046040">
    <property type="term" value="P:IMP metabolic process"/>
    <property type="evidence" value="ECO:0007669"/>
    <property type="project" value="TreeGrafter"/>
</dbReference>
<dbReference type="CDD" id="cd03108">
    <property type="entry name" value="AdSS"/>
    <property type="match status" value="1"/>
</dbReference>
<dbReference type="FunFam" id="1.10.300.10:FF:000001">
    <property type="entry name" value="Adenylosuccinate synthetase"/>
    <property type="match status" value="1"/>
</dbReference>
<dbReference type="FunFam" id="3.90.170.10:FF:000001">
    <property type="entry name" value="Adenylosuccinate synthetase"/>
    <property type="match status" value="1"/>
</dbReference>
<dbReference type="Gene3D" id="3.40.440.10">
    <property type="entry name" value="Adenylosuccinate Synthetase, subunit A, domain 1"/>
    <property type="match status" value="1"/>
</dbReference>
<dbReference type="Gene3D" id="1.10.300.10">
    <property type="entry name" value="Adenylosuccinate Synthetase, subunit A, domain 2"/>
    <property type="match status" value="1"/>
</dbReference>
<dbReference type="Gene3D" id="3.90.170.10">
    <property type="entry name" value="Adenylosuccinate Synthetase, subunit A, domain 3"/>
    <property type="match status" value="1"/>
</dbReference>
<dbReference type="HAMAP" id="MF_00011">
    <property type="entry name" value="Adenylosucc_synth"/>
    <property type="match status" value="1"/>
</dbReference>
<dbReference type="InterPro" id="IPR018220">
    <property type="entry name" value="Adenylosuccin_syn_GTP-bd"/>
</dbReference>
<dbReference type="InterPro" id="IPR033128">
    <property type="entry name" value="Adenylosuccin_syn_Lys_AS"/>
</dbReference>
<dbReference type="InterPro" id="IPR042109">
    <property type="entry name" value="Adenylosuccinate_synth_dom1"/>
</dbReference>
<dbReference type="InterPro" id="IPR042110">
    <property type="entry name" value="Adenylosuccinate_synth_dom2"/>
</dbReference>
<dbReference type="InterPro" id="IPR042111">
    <property type="entry name" value="Adenylosuccinate_synth_dom3"/>
</dbReference>
<dbReference type="InterPro" id="IPR001114">
    <property type="entry name" value="Adenylosuccinate_synthetase"/>
</dbReference>
<dbReference type="InterPro" id="IPR027417">
    <property type="entry name" value="P-loop_NTPase"/>
</dbReference>
<dbReference type="NCBIfam" id="NF002223">
    <property type="entry name" value="PRK01117.1"/>
    <property type="match status" value="1"/>
</dbReference>
<dbReference type="NCBIfam" id="TIGR00184">
    <property type="entry name" value="purA"/>
    <property type="match status" value="1"/>
</dbReference>
<dbReference type="PANTHER" id="PTHR11846">
    <property type="entry name" value="ADENYLOSUCCINATE SYNTHETASE"/>
    <property type="match status" value="1"/>
</dbReference>
<dbReference type="PANTHER" id="PTHR11846:SF0">
    <property type="entry name" value="ADENYLOSUCCINATE SYNTHETASE"/>
    <property type="match status" value="1"/>
</dbReference>
<dbReference type="Pfam" id="PF00709">
    <property type="entry name" value="Adenylsucc_synt"/>
    <property type="match status" value="1"/>
</dbReference>
<dbReference type="SMART" id="SM00788">
    <property type="entry name" value="Adenylsucc_synt"/>
    <property type="match status" value="1"/>
</dbReference>
<dbReference type="SUPFAM" id="SSF52540">
    <property type="entry name" value="P-loop containing nucleoside triphosphate hydrolases"/>
    <property type="match status" value="1"/>
</dbReference>
<dbReference type="PROSITE" id="PS01266">
    <property type="entry name" value="ADENYLOSUCCIN_SYN_1"/>
    <property type="match status" value="1"/>
</dbReference>
<dbReference type="PROSITE" id="PS00513">
    <property type="entry name" value="ADENYLOSUCCIN_SYN_2"/>
    <property type="match status" value="1"/>
</dbReference>
<accession>B1VHT9</accession>
<keyword id="KW-0963">Cytoplasm</keyword>
<keyword id="KW-0342">GTP-binding</keyword>
<keyword id="KW-0436">Ligase</keyword>
<keyword id="KW-0460">Magnesium</keyword>
<keyword id="KW-0479">Metal-binding</keyword>
<keyword id="KW-0547">Nucleotide-binding</keyword>
<keyword id="KW-0658">Purine biosynthesis</keyword>
<keyword id="KW-1185">Reference proteome</keyword>
<name>PURA_CORU7</name>
<sequence>MAAIIVVGAQWGDEGKGKATDILGGQVDYVVKPNGGNNAGHTVVVGGEKYELKLLPAGILSDNATSIIGNGCVVNLEALFEEIDGLQARGADTSHLRVSANAQLVAPYHVAIDRVSERFLGKRAIGTTGRGIGPTYQDKVGRVGIRAQDLLDESILRQKIESALDKKNQMLVKMYNRRAIEPEEVVQYFLSYADRLAPMLIDSSKVLNEALDRGERVLMEGGQATMLDVDHGTYPFVTSSNPTTGGACVGSGVGPTRITSSLGIIKAYTTRVGAGPFPTELFDKWGEYLQTTGGEVGVNTGRPRRCGWYDSVIARYASRVNGFTDYFLTKLDVLTGIGEIPICVAYDVDGVRHDEMPMTQTEFHHATPIYETMPAWDEDITGCRTFEELPEKAQDYVKRLEELSGCRMSYIGVGPGRDQTIVINDILKD</sequence>
<proteinExistence type="inferred from homology"/>
<feature type="chain" id="PRO_1000089282" description="Adenylosuccinate synthetase">
    <location>
        <begin position="1"/>
        <end position="429"/>
    </location>
</feature>
<feature type="active site" description="Proton acceptor" evidence="1">
    <location>
        <position position="13"/>
    </location>
</feature>
<feature type="active site" description="Proton donor" evidence="1">
    <location>
        <position position="41"/>
    </location>
</feature>
<feature type="binding site" evidence="1">
    <location>
        <begin position="12"/>
        <end position="18"/>
    </location>
    <ligand>
        <name>GTP</name>
        <dbReference type="ChEBI" id="CHEBI:37565"/>
    </ligand>
</feature>
<feature type="binding site" description="in other chain" evidence="1">
    <location>
        <begin position="13"/>
        <end position="16"/>
    </location>
    <ligand>
        <name>IMP</name>
        <dbReference type="ChEBI" id="CHEBI:58053"/>
        <note>ligand shared between dimeric partners</note>
    </ligand>
</feature>
<feature type="binding site" evidence="1">
    <location>
        <position position="13"/>
    </location>
    <ligand>
        <name>Mg(2+)</name>
        <dbReference type="ChEBI" id="CHEBI:18420"/>
    </ligand>
</feature>
<feature type="binding site" description="in other chain" evidence="1">
    <location>
        <begin position="38"/>
        <end position="41"/>
    </location>
    <ligand>
        <name>IMP</name>
        <dbReference type="ChEBI" id="CHEBI:58053"/>
        <note>ligand shared between dimeric partners</note>
    </ligand>
</feature>
<feature type="binding site" evidence="1">
    <location>
        <begin position="40"/>
        <end position="42"/>
    </location>
    <ligand>
        <name>GTP</name>
        <dbReference type="ChEBI" id="CHEBI:37565"/>
    </ligand>
</feature>
<feature type="binding site" evidence="1">
    <location>
        <position position="40"/>
    </location>
    <ligand>
        <name>Mg(2+)</name>
        <dbReference type="ChEBI" id="CHEBI:18420"/>
    </ligand>
</feature>
<feature type="binding site" description="in other chain" evidence="1">
    <location>
        <position position="128"/>
    </location>
    <ligand>
        <name>IMP</name>
        <dbReference type="ChEBI" id="CHEBI:58053"/>
        <note>ligand shared between dimeric partners</note>
    </ligand>
</feature>
<feature type="binding site" evidence="1">
    <location>
        <position position="142"/>
    </location>
    <ligand>
        <name>IMP</name>
        <dbReference type="ChEBI" id="CHEBI:58053"/>
        <note>ligand shared between dimeric partners</note>
    </ligand>
</feature>
<feature type="binding site" description="in other chain" evidence="1">
    <location>
        <position position="223"/>
    </location>
    <ligand>
        <name>IMP</name>
        <dbReference type="ChEBI" id="CHEBI:58053"/>
        <note>ligand shared between dimeric partners</note>
    </ligand>
</feature>
<feature type="binding site" description="in other chain" evidence="1">
    <location>
        <position position="238"/>
    </location>
    <ligand>
        <name>IMP</name>
        <dbReference type="ChEBI" id="CHEBI:58053"/>
        <note>ligand shared between dimeric partners</note>
    </ligand>
</feature>
<feature type="binding site" evidence="1">
    <location>
        <begin position="298"/>
        <end position="304"/>
    </location>
    <ligand>
        <name>substrate</name>
    </ligand>
</feature>
<feature type="binding site" description="in other chain" evidence="1">
    <location>
        <position position="302"/>
    </location>
    <ligand>
        <name>IMP</name>
        <dbReference type="ChEBI" id="CHEBI:58053"/>
        <note>ligand shared between dimeric partners</note>
    </ligand>
</feature>
<feature type="binding site" evidence="1">
    <location>
        <position position="304"/>
    </location>
    <ligand>
        <name>GTP</name>
        <dbReference type="ChEBI" id="CHEBI:37565"/>
    </ligand>
</feature>
<feature type="binding site" evidence="1">
    <location>
        <begin position="330"/>
        <end position="332"/>
    </location>
    <ligand>
        <name>GTP</name>
        <dbReference type="ChEBI" id="CHEBI:37565"/>
    </ligand>
</feature>
<feature type="binding site" evidence="1">
    <location>
        <begin position="412"/>
        <end position="414"/>
    </location>
    <ligand>
        <name>GTP</name>
        <dbReference type="ChEBI" id="CHEBI:37565"/>
    </ligand>
</feature>
<evidence type="ECO:0000255" key="1">
    <source>
        <dbReference type="HAMAP-Rule" id="MF_00011"/>
    </source>
</evidence>